<feature type="chain" id="PRO_0000104892" description="Large ribosomal subunit protein uL15">
    <location>
        <begin position="1"/>
        <end position="145"/>
    </location>
</feature>
<feature type="region of interest" description="Disordered" evidence="3">
    <location>
        <begin position="1"/>
        <end position="48"/>
    </location>
</feature>
<feature type="compositionally biased region" description="Basic residues" evidence="3">
    <location>
        <begin position="1"/>
        <end position="30"/>
    </location>
</feature>
<gene>
    <name type="primary">rpl-27a</name>
    <name type="synonym">rpl-27</name>
</gene>
<reference key="1">
    <citation type="journal article" date="1997" name="Proc. Natl. Acad. Sci. U.S.A.">
        <title>Operons and SL2 trans-splicing exist in nematodes outside the genus Caenorhabditis.</title>
        <authorList>
            <person name="Evans D."/>
            <person name="Zorio D.A.R."/>
            <person name="Macmorris M."/>
            <person name="Winter C.E."/>
            <person name="Lea K."/>
            <person name="Blumenthal T."/>
        </authorList>
    </citation>
    <scope>NUCLEOTIDE SEQUENCE [GENOMIC DNA]</scope>
    <source>
        <strain>CEW1</strain>
    </source>
</reference>
<comment type="function">
    <text evidence="2">Component of the large ribosomal subunit.</text>
</comment>
<comment type="subunit">
    <text evidence="2">Component of the large ribosomal subunit.</text>
</comment>
<comment type="subcellular location">
    <subcellularLocation>
        <location evidence="2">Cytoplasm</location>
        <location evidence="2">Cytosol</location>
    </subcellularLocation>
    <subcellularLocation>
        <location evidence="2">Cytoplasm</location>
    </subcellularLocation>
    <subcellularLocation>
        <location evidence="1">Rough endoplasmic reticulum</location>
    </subcellularLocation>
    <text evidence="1 2">Detected on cytosolic polysomes (By similarity). Detected in ribosomes that are associated with the rough endoplasmic reticulum (By similarity).</text>
</comment>
<comment type="similarity">
    <text evidence="4">Belongs to the universal ribosomal protein uL15 family.</text>
</comment>
<organism>
    <name type="scientific">Oscheius tipulae</name>
    <dbReference type="NCBI Taxonomy" id="141969"/>
    <lineage>
        <taxon>Eukaryota</taxon>
        <taxon>Metazoa</taxon>
        <taxon>Ecdysozoa</taxon>
        <taxon>Nematoda</taxon>
        <taxon>Chromadorea</taxon>
        <taxon>Rhabditida</taxon>
        <taxon>Rhabditina</taxon>
        <taxon>Rhabditomorpha</taxon>
        <taxon>Rhabditoidea</taxon>
        <taxon>Rhabditidae</taxon>
        <taxon>Rhabditinae</taxon>
        <taxon>Oscheius</taxon>
    </lineage>
</organism>
<protein>
    <recommendedName>
        <fullName evidence="4">Large ribosomal subunit protein uL15</fullName>
    </recommendedName>
    <alternativeName>
        <fullName>60S ribosomal protein L27a</fullName>
    </alternativeName>
    <alternativeName>
        <fullName>Ribosomal protein RPL-27</fullName>
    </alternativeName>
</protein>
<evidence type="ECO:0000250" key="1">
    <source>
        <dbReference type="UniProtKB" id="A1XQU5"/>
    </source>
</evidence>
<evidence type="ECO:0000250" key="2">
    <source>
        <dbReference type="UniProtKB" id="P61353"/>
    </source>
</evidence>
<evidence type="ECO:0000256" key="3">
    <source>
        <dbReference type="SAM" id="MobiDB-lite"/>
    </source>
</evidence>
<evidence type="ECO:0000305" key="4"/>
<dbReference type="EMBL" id="U90830">
    <property type="protein sequence ID" value="AAB71725.1"/>
    <property type="molecule type" value="Genomic_DNA"/>
</dbReference>
<dbReference type="PIR" id="T10266">
    <property type="entry name" value="T10266"/>
</dbReference>
<dbReference type="SMR" id="O01358"/>
<dbReference type="GO" id="GO:0098556">
    <property type="term" value="C:cytoplasmic side of rough endoplasmic reticulum membrane"/>
    <property type="evidence" value="ECO:0000250"/>
    <property type="project" value="UniProtKB"/>
</dbReference>
<dbReference type="GO" id="GO:0022625">
    <property type="term" value="C:cytosolic large ribosomal subunit"/>
    <property type="evidence" value="ECO:0007669"/>
    <property type="project" value="TreeGrafter"/>
</dbReference>
<dbReference type="GO" id="GO:0015934">
    <property type="term" value="C:large ribosomal subunit"/>
    <property type="evidence" value="ECO:0000250"/>
    <property type="project" value="UniProtKB"/>
</dbReference>
<dbReference type="GO" id="GO:0003735">
    <property type="term" value="F:structural constituent of ribosome"/>
    <property type="evidence" value="ECO:0007669"/>
    <property type="project" value="InterPro"/>
</dbReference>
<dbReference type="GO" id="GO:0006412">
    <property type="term" value="P:translation"/>
    <property type="evidence" value="ECO:0007669"/>
    <property type="project" value="InterPro"/>
</dbReference>
<dbReference type="FunFam" id="3.100.10.10:FF:000002">
    <property type="entry name" value="60S ribosomal protein L27a"/>
    <property type="match status" value="1"/>
</dbReference>
<dbReference type="Gene3D" id="3.100.10.10">
    <property type="match status" value="1"/>
</dbReference>
<dbReference type="HAMAP" id="MF_01341">
    <property type="entry name" value="Ribosomal_uL15"/>
    <property type="match status" value="1"/>
</dbReference>
<dbReference type="InterPro" id="IPR030878">
    <property type="entry name" value="Ribosomal_uL15"/>
</dbReference>
<dbReference type="InterPro" id="IPR021131">
    <property type="entry name" value="Ribosomal_uL15/eL18"/>
</dbReference>
<dbReference type="InterPro" id="IPR036227">
    <property type="entry name" value="Ribosomal_uL15/eL18_sf"/>
</dbReference>
<dbReference type="InterPro" id="IPR001196">
    <property type="entry name" value="Ribosomal_uL15_CS"/>
</dbReference>
<dbReference type="PANTHER" id="PTHR11721">
    <property type="entry name" value="60S RIBOSOMAL PROTEIN L27A"/>
    <property type="match status" value="1"/>
</dbReference>
<dbReference type="PANTHER" id="PTHR11721:SF3">
    <property type="entry name" value="LARGE RIBOSOMAL SUBUNIT PROTEIN UL15"/>
    <property type="match status" value="1"/>
</dbReference>
<dbReference type="Pfam" id="PF00828">
    <property type="entry name" value="Ribosomal_L27A"/>
    <property type="match status" value="1"/>
</dbReference>
<dbReference type="SUPFAM" id="SSF52080">
    <property type="entry name" value="Ribosomal proteins L15p and L18e"/>
    <property type="match status" value="1"/>
</dbReference>
<dbReference type="PROSITE" id="PS00475">
    <property type="entry name" value="RIBOSOMAL_L15"/>
    <property type="match status" value="1"/>
</dbReference>
<keyword id="KW-0963">Cytoplasm</keyword>
<keyword id="KW-0256">Endoplasmic reticulum</keyword>
<keyword id="KW-0687">Ribonucleoprotein</keyword>
<keyword id="KW-0689">Ribosomal protein</keyword>
<name>RL27A_OSCTI</name>
<proteinExistence type="inferred from homology"/>
<sequence>MAHSLRKTRKLRGHVSHGHGRIGKHRKHPGGRGNAGGQHHHRINRDKYHPGYFGKVGMRVFHLNKNHHYCPTVNVDRLWALVPEEQKTKVSAEKAPVIDCVKAGYFKVLGKGLLPKQPLIVKAKFFSHEAENKIKAAGGACILVA</sequence>
<accession>O01358</accession>